<gene>
    <name evidence="1" type="primary">engB</name>
    <name type="ordered locus">Sde_0075</name>
</gene>
<name>ENGB_SACD2</name>
<accession>Q21PP0</accession>
<sequence length="213" mass="23595">MAKIHFRTAQFLISAPSIRQCPTEEGTEVAFAGRSNAGKSSAINTLTGNGKLARTSKTPGRTQLINFFNFPAAPDQRIVDLPGYGYAKVPMAVKKKWQADLSEYLQQRDALRGLVIVMDIRHPLQDFDTMMINWAVEGEMPVHLLLTKADKLKPGAAKSTLLAVQKHMRDAQVDDLVSAQMFSALKKQGINQLEDVLNGWLLPQHDEPEAAQE</sequence>
<reference key="1">
    <citation type="journal article" date="2008" name="PLoS Genet.">
        <title>Complete genome sequence of the complex carbohydrate-degrading marine bacterium, Saccharophagus degradans strain 2-40 T.</title>
        <authorList>
            <person name="Weiner R.M."/>
            <person name="Taylor L.E. II"/>
            <person name="Henrissat B."/>
            <person name="Hauser L."/>
            <person name="Land M."/>
            <person name="Coutinho P.M."/>
            <person name="Rancurel C."/>
            <person name="Saunders E.H."/>
            <person name="Longmire A.G."/>
            <person name="Zhang H."/>
            <person name="Bayer E.A."/>
            <person name="Gilbert H.J."/>
            <person name="Larimer F."/>
            <person name="Zhulin I.B."/>
            <person name="Ekborg N.A."/>
            <person name="Lamed R."/>
            <person name="Richardson P.M."/>
            <person name="Borovok I."/>
            <person name="Hutcheson S."/>
        </authorList>
    </citation>
    <scope>NUCLEOTIDE SEQUENCE [LARGE SCALE GENOMIC DNA]</scope>
    <source>
        <strain>2-40 / ATCC 43961 / DSM 17024</strain>
    </source>
</reference>
<evidence type="ECO:0000255" key="1">
    <source>
        <dbReference type="HAMAP-Rule" id="MF_00321"/>
    </source>
</evidence>
<feature type="chain" id="PRO_0000266939" description="Probable GTP-binding protein EngB">
    <location>
        <begin position="1"/>
        <end position="213"/>
    </location>
</feature>
<feature type="domain" description="EngB-type G" evidence="1">
    <location>
        <begin position="25"/>
        <end position="203"/>
    </location>
</feature>
<feature type="binding site" evidence="1">
    <location>
        <begin position="33"/>
        <end position="40"/>
    </location>
    <ligand>
        <name>GTP</name>
        <dbReference type="ChEBI" id="CHEBI:37565"/>
    </ligand>
</feature>
<feature type="binding site" evidence="1">
    <location>
        <position position="40"/>
    </location>
    <ligand>
        <name>Mg(2+)</name>
        <dbReference type="ChEBI" id="CHEBI:18420"/>
    </ligand>
</feature>
<feature type="binding site" evidence="1">
    <location>
        <begin position="60"/>
        <end position="64"/>
    </location>
    <ligand>
        <name>GTP</name>
        <dbReference type="ChEBI" id="CHEBI:37565"/>
    </ligand>
</feature>
<feature type="binding site" evidence="1">
    <location>
        <position position="62"/>
    </location>
    <ligand>
        <name>Mg(2+)</name>
        <dbReference type="ChEBI" id="CHEBI:18420"/>
    </ligand>
</feature>
<feature type="binding site" evidence="1">
    <location>
        <begin position="80"/>
        <end position="83"/>
    </location>
    <ligand>
        <name>GTP</name>
        <dbReference type="ChEBI" id="CHEBI:37565"/>
    </ligand>
</feature>
<feature type="binding site" evidence="1">
    <location>
        <begin position="147"/>
        <end position="150"/>
    </location>
    <ligand>
        <name>GTP</name>
        <dbReference type="ChEBI" id="CHEBI:37565"/>
    </ligand>
</feature>
<feature type="binding site" evidence="1">
    <location>
        <begin position="179"/>
        <end position="184"/>
    </location>
    <ligand>
        <name>GTP</name>
        <dbReference type="ChEBI" id="CHEBI:37565"/>
    </ligand>
</feature>
<proteinExistence type="inferred from homology"/>
<protein>
    <recommendedName>
        <fullName evidence="1">Probable GTP-binding protein EngB</fullName>
    </recommendedName>
</protein>
<keyword id="KW-0131">Cell cycle</keyword>
<keyword id="KW-0132">Cell division</keyword>
<keyword id="KW-0342">GTP-binding</keyword>
<keyword id="KW-0460">Magnesium</keyword>
<keyword id="KW-0479">Metal-binding</keyword>
<keyword id="KW-0547">Nucleotide-binding</keyword>
<keyword id="KW-1185">Reference proteome</keyword>
<keyword id="KW-0717">Septation</keyword>
<organism>
    <name type="scientific">Saccharophagus degradans (strain 2-40 / ATCC 43961 / DSM 17024)</name>
    <dbReference type="NCBI Taxonomy" id="203122"/>
    <lineage>
        <taxon>Bacteria</taxon>
        <taxon>Pseudomonadati</taxon>
        <taxon>Pseudomonadota</taxon>
        <taxon>Gammaproteobacteria</taxon>
        <taxon>Cellvibrionales</taxon>
        <taxon>Cellvibrionaceae</taxon>
        <taxon>Saccharophagus</taxon>
    </lineage>
</organism>
<comment type="function">
    <text evidence="1">Necessary for normal cell division and for the maintenance of normal septation.</text>
</comment>
<comment type="cofactor">
    <cofactor evidence="1">
        <name>Mg(2+)</name>
        <dbReference type="ChEBI" id="CHEBI:18420"/>
    </cofactor>
</comment>
<comment type="similarity">
    <text evidence="1">Belongs to the TRAFAC class TrmE-Era-EngA-EngB-Septin-like GTPase superfamily. EngB GTPase family.</text>
</comment>
<dbReference type="EMBL" id="CP000282">
    <property type="protein sequence ID" value="ABD79339.1"/>
    <property type="molecule type" value="Genomic_DNA"/>
</dbReference>
<dbReference type="RefSeq" id="WP_011466563.1">
    <property type="nucleotide sequence ID" value="NC_007912.1"/>
</dbReference>
<dbReference type="SMR" id="Q21PP0"/>
<dbReference type="STRING" id="203122.Sde_0075"/>
<dbReference type="GeneID" id="98611792"/>
<dbReference type="KEGG" id="sde:Sde_0075"/>
<dbReference type="eggNOG" id="COG0218">
    <property type="taxonomic scope" value="Bacteria"/>
</dbReference>
<dbReference type="HOGENOM" id="CLU_033732_1_0_6"/>
<dbReference type="OrthoDB" id="9804921at2"/>
<dbReference type="Proteomes" id="UP000001947">
    <property type="component" value="Chromosome"/>
</dbReference>
<dbReference type="GO" id="GO:0005829">
    <property type="term" value="C:cytosol"/>
    <property type="evidence" value="ECO:0007669"/>
    <property type="project" value="TreeGrafter"/>
</dbReference>
<dbReference type="GO" id="GO:0005525">
    <property type="term" value="F:GTP binding"/>
    <property type="evidence" value="ECO:0007669"/>
    <property type="project" value="UniProtKB-UniRule"/>
</dbReference>
<dbReference type="GO" id="GO:0046872">
    <property type="term" value="F:metal ion binding"/>
    <property type="evidence" value="ECO:0007669"/>
    <property type="project" value="UniProtKB-KW"/>
</dbReference>
<dbReference type="GO" id="GO:0000917">
    <property type="term" value="P:division septum assembly"/>
    <property type="evidence" value="ECO:0007669"/>
    <property type="project" value="UniProtKB-KW"/>
</dbReference>
<dbReference type="CDD" id="cd01876">
    <property type="entry name" value="YihA_EngB"/>
    <property type="match status" value="1"/>
</dbReference>
<dbReference type="FunFam" id="3.40.50.300:FF:000098">
    <property type="entry name" value="Probable GTP-binding protein EngB"/>
    <property type="match status" value="1"/>
</dbReference>
<dbReference type="Gene3D" id="3.40.50.300">
    <property type="entry name" value="P-loop containing nucleotide triphosphate hydrolases"/>
    <property type="match status" value="1"/>
</dbReference>
<dbReference type="HAMAP" id="MF_00321">
    <property type="entry name" value="GTPase_EngB"/>
    <property type="match status" value="1"/>
</dbReference>
<dbReference type="InterPro" id="IPR030393">
    <property type="entry name" value="G_ENGB_dom"/>
</dbReference>
<dbReference type="InterPro" id="IPR006073">
    <property type="entry name" value="GTP-bd"/>
</dbReference>
<dbReference type="InterPro" id="IPR019987">
    <property type="entry name" value="GTP-bd_ribosome_bio_YsxC"/>
</dbReference>
<dbReference type="InterPro" id="IPR027417">
    <property type="entry name" value="P-loop_NTPase"/>
</dbReference>
<dbReference type="NCBIfam" id="TIGR03598">
    <property type="entry name" value="GTPase_YsxC"/>
    <property type="match status" value="1"/>
</dbReference>
<dbReference type="PANTHER" id="PTHR11649:SF13">
    <property type="entry name" value="ENGB-TYPE G DOMAIN-CONTAINING PROTEIN"/>
    <property type="match status" value="1"/>
</dbReference>
<dbReference type="PANTHER" id="PTHR11649">
    <property type="entry name" value="MSS1/TRME-RELATED GTP-BINDING PROTEIN"/>
    <property type="match status" value="1"/>
</dbReference>
<dbReference type="Pfam" id="PF01926">
    <property type="entry name" value="MMR_HSR1"/>
    <property type="match status" value="1"/>
</dbReference>
<dbReference type="SUPFAM" id="SSF52540">
    <property type="entry name" value="P-loop containing nucleoside triphosphate hydrolases"/>
    <property type="match status" value="1"/>
</dbReference>
<dbReference type="PROSITE" id="PS51706">
    <property type="entry name" value="G_ENGB"/>
    <property type="match status" value="1"/>
</dbReference>